<accession>Q07429</accession>
<name>AMTB_BACSU</name>
<reference key="1">
    <citation type="journal article" date="1994" name="J. Bacteriol.">
        <title>The nitrogen-regulated Bacillus subtilis nrgAB operon encodes a membrane protein and a protein highly similar to the Escherichia coli glnB-encoded PII protein.</title>
        <authorList>
            <person name="Wray L.V. Jr."/>
            <person name="Atkinson M.R."/>
            <person name="Fisher S.H."/>
        </authorList>
    </citation>
    <scope>NUCLEOTIDE SEQUENCE [GENOMIC DNA]</scope>
    <scope>SUBCELLULAR LOCATION</scope>
</reference>
<reference key="2">
    <citation type="journal article" date="1997" name="Microbiology">
        <title>The Bacillus subtilis genome from gerBC (311 degrees) to licR (334 degrees).</title>
        <authorList>
            <person name="Presecan E."/>
            <person name="Moszer I."/>
            <person name="Boursier L."/>
            <person name="Cruz Ramos H."/>
            <person name="De La Fuente V."/>
            <person name="Hullo M.-F."/>
            <person name="Lelong C."/>
            <person name="Schleich S."/>
            <person name="Sekowska A."/>
            <person name="Song B.H."/>
            <person name="Villani G."/>
            <person name="Kunst F."/>
            <person name="Danchin A."/>
            <person name="Glaser P."/>
        </authorList>
    </citation>
    <scope>NUCLEOTIDE SEQUENCE [GENOMIC DNA]</scope>
    <source>
        <strain>168</strain>
    </source>
</reference>
<reference key="3">
    <citation type="journal article" date="1997" name="Nature">
        <title>The complete genome sequence of the Gram-positive bacterium Bacillus subtilis.</title>
        <authorList>
            <person name="Kunst F."/>
            <person name="Ogasawara N."/>
            <person name="Moszer I."/>
            <person name="Albertini A.M."/>
            <person name="Alloni G."/>
            <person name="Azevedo V."/>
            <person name="Bertero M.G."/>
            <person name="Bessieres P."/>
            <person name="Bolotin A."/>
            <person name="Borchert S."/>
            <person name="Borriss R."/>
            <person name="Boursier L."/>
            <person name="Brans A."/>
            <person name="Braun M."/>
            <person name="Brignell S.C."/>
            <person name="Bron S."/>
            <person name="Brouillet S."/>
            <person name="Bruschi C.V."/>
            <person name="Caldwell B."/>
            <person name="Capuano V."/>
            <person name="Carter N.M."/>
            <person name="Choi S.-K."/>
            <person name="Codani J.-J."/>
            <person name="Connerton I.F."/>
            <person name="Cummings N.J."/>
            <person name="Daniel R.A."/>
            <person name="Denizot F."/>
            <person name="Devine K.M."/>
            <person name="Duesterhoeft A."/>
            <person name="Ehrlich S.D."/>
            <person name="Emmerson P.T."/>
            <person name="Entian K.-D."/>
            <person name="Errington J."/>
            <person name="Fabret C."/>
            <person name="Ferrari E."/>
            <person name="Foulger D."/>
            <person name="Fritz C."/>
            <person name="Fujita M."/>
            <person name="Fujita Y."/>
            <person name="Fuma S."/>
            <person name="Galizzi A."/>
            <person name="Galleron N."/>
            <person name="Ghim S.-Y."/>
            <person name="Glaser P."/>
            <person name="Goffeau A."/>
            <person name="Golightly E.J."/>
            <person name="Grandi G."/>
            <person name="Guiseppi G."/>
            <person name="Guy B.J."/>
            <person name="Haga K."/>
            <person name="Haiech J."/>
            <person name="Harwood C.R."/>
            <person name="Henaut A."/>
            <person name="Hilbert H."/>
            <person name="Holsappel S."/>
            <person name="Hosono S."/>
            <person name="Hullo M.-F."/>
            <person name="Itaya M."/>
            <person name="Jones L.-M."/>
            <person name="Joris B."/>
            <person name="Karamata D."/>
            <person name="Kasahara Y."/>
            <person name="Klaerr-Blanchard M."/>
            <person name="Klein C."/>
            <person name="Kobayashi Y."/>
            <person name="Koetter P."/>
            <person name="Koningstein G."/>
            <person name="Krogh S."/>
            <person name="Kumano M."/>
            <person name="Kurita K."/>
            <person name="Lapidus A."/>
            <person name="Lardinois S."/>
            <person name="Lauber J."/>
            <person name="Lazarevic V."/>
            <person name="Lee S.-M."/>
            <person name="Levine A."/>
            <person name="Liu H."/>
            <person name="Masuda S."/>
            <person name="Mauel C."/>
            <person name="Medigue C."/>
            <person name="Medina N."/>
            <person name="Mellado R.P."/>
            <person name="Mizuno M."/>
            <person name="Moestl D."/>
            <person name="Nakai S."/>
            <person name="Noback M."/>
            <person name="Noone D."/>
            <person name="O'Reilly M."/>
            <person name="Ogawa K."/>
            <person name="Ogiwara A."/>
            <person name="Oudega B."/>
            <person name="Park S.-H."/>
            <person name="Parro V."/>
            <person name="Pohl T.M."/>
            <person name="Portetelle D."/>
            <person name="Porwollik S."/>
            <person name="Prescott A.M."/>
            <person name="Presecan E."/>
            <person name="Pujic P."/>
            <person name="Purnelle B."/>
            <person name="Rapoport G."/>
            <person name="Rey M."/>
            <person name="Reynolds S."/>
            <person name="Rieger M."/>
            <person name="Rivolta C."/>
            <person name="Rocha E."/>
            <person name="Roche B."/>
            <person name="Rose M."/>
            <person name="Sadaie Y."/>
            <person name="Sato T."/>
            <person name="Scanlan E."/>
            <person name="Schleich S."/>
            <person name="Schroeter R."/>
            <person name="Scoffone F."/>
            <person name="Sekiguchi J."/>
            <person name="Sekowska A."/>
            <person name="Seror S.J."/>
            <person name="Serror P."/>
            <person name="Shin B.-S."/>
            <person name="Soldo B."/>
            <person name="Sorokin A."/>
            <person name="Tacconi E."/>
            <person name="Takagi T."/>
            <person name="Takahashi H."/>
            <person name="Takemaru K."/>
            <person name="Takeuchi M."/>
            <person name="Tamakoshi A."/>
            <person name="Tanaka T."/>
            <person name="Terpstra P."/>
            <person name="Tognoni A."/>
            <person name="Tosato V."/>
            <person name="Uchiyama S."/>
            <person name="Vandenbol M."/>
            <person name="Vannier F."/>
            <person name="Vassarotti A."/>
            <person name="Viari A."/>
            <person name="Wambutt R."/>
            <person name="Wedler E."/>
            <person name="Wedler H."/>
            <person name="Weitzenegger T."/>
            <person name="Winters P."/>
            <person name="Wipat A."/>
            <person name="Yamamoto H."/>
            <person name="Yamane K."/>
            <person name="Yasumoto K."/>
            <person name="Yata K."/>
            <person name="Yoshida K."/>
            <person name="Yoshikawa H.-F."/>
            <person name="Zumstein E."/>
            <person name="Yoshikawa H."/>
            <person name="Danchin A."/>
        </authorList>
    </citation>
    <scope>NUCLEOTIDE SEQUENCE [LARGE SCALE GENOMIC DNA]</scope>
    <source>
        <strain>168</strain>
    </source>
</reference>
<reference key="4">
    <citation type="journal article" date="2000" name="J. Mol. Biol.">
        <title>Purification and in vitro activities of the Bacillus subtilis TnrA transcription factor.</title>
        <authorList>
            <person name="Wray L.V. Jr."/>
            <person name="Zalieckas J.M."/>
            <person name="Fisher S.H."/>
        </authorList>
    </citation>
    <scope>INDUCTION BY TNRA</scope>
    <source>
        <strain>168</strain>
    </source>
</reference>
<reference key="5">
    <citation type="journal article" date="2003" name="Microbiology">
        <title>Ammonium utilization in Bacillus subtilis: transport and regulatory functions of NrgA and NrgB.</title>
        <authorList>
            <person name="Detsch C."/>
            <person name="Stuelke J."/>
        </authorList>
    </citation>
    <scope>FUNCTION</scope>
    <scope>DISRUPTION PHENOTYPE</scope>
    <scope>INDUCTION</scope>
    <scope>SUBUNIT</scope>
    <source>
        <strain>168</strain>
    </source>
</reference>
<reference key="6">
    <citation type="journal article" date="2003" name="Mol. Microbiol.">
        <title>Identification of additional TnrA-regulated genes of Bacillus subtilis associated with a TnrA box.</title>
        <authorList>
            <person name="Yoshida K."/>
            <person name="Yamaguchi H."/>
            <person name="Kinehara M."/>
            <person name="Ohki Y.-H."/>
            <person name="Nakaura Y."/>
            <person name="Fujita Y."/>
        </authorList>
    </citation>
    <scope>INDUCTION BY TNRA</scope>
</reference>
<reference key="7">
    <citation type="journal article" date="2006" name="J. Biol. Chem.">
        <title>Interaction of the membrane-bound GlnK-AmtB complex with the master regulator of nitrogen metabolism TnrA in Bacillus subtilis.</title>
        <authorList>
            <person name="Heinrich A."/>
            <person name="Woyda K."/>
            <person name="Brauburger K."/>
            <person name="Meiss G."/>
            <person name="Detsch C."/>
            <person name="Stuelke J."/>
            <person name="Forchhammer K."/>
        </authorList>
    </citation>
    <scope>FUNCTION</scope>
    <scope>INTERACTION WITH GLNK AND TNRA</scope>
    <scope>DISRUPTION PHENOTYPE</scope>
</reference>
<reference key="8">
    <citation type="journal article" date="2011" name="FEBS J.">
        <title>Interaction of the general transcription factor TnrA with the PII-like protein GlnK and glutamine synthetase in Bacillus subtilis.</title>
        <authorList>
            <person name="Kayumov A."/>
            <person name="Heinrich A."/>
            <person name="Fedorova K."/>
            <person name="Ilinskaya O."/>
            <person name="Forchhammer K."/>
        </authorList>
    </citation>
    <scope>FUNCTION</scope>
    <scope>INTERACTION WITH GLNK AND TNRA</scope>
    <scope>DISRUPTION PHENOTYPE</scope>
</reference>
<comment type="function">
    <text evidence="4 5 6">Functions as an ammonium and methylammonium transporter in the absence of glutamine (PubMed:14600241). Required for ammonium utilization at low concentrations or at low pH values, when ammonium is the single nitrogen source (PubMed:14600241). Required for binding of NrgB to the membrane (PubMed:14600241). Interaction between GlnK-AmtB complex and TnrA protects TnrA from proteolytic degradation (PubMed:17001076, PubMed:21435182).</text>
</comment>
<comment type="subunit">
    <text evidence="5 6 10">Interacts with NrgB for a correct localization of the latter. GlnK-AmtB complex interacts with TnrA.</text>
</comment>
<comment type="subcellular location">
    <subcellularLocation>
        <location evidence="11">Cell membrane</location>
        <topology evidence="11">Multi-pass membrane protein</topology>
    </subcellularLocation>
</comment>
<comment type="induction">
    <text evidence="2 3 4">The nrgAB operon is activated by TnrA (PubMed:12823818). NrgB is required for full induction of the operon under conditions of ammonium limitation (PubMed:10864496, PubMed:14600241).</text>
</comment>
<comment type="disruption phenotype">
    <text evidence="4 5 6">Cells grow poorly at pH 5.5 and not at all at pH 5.0 with ammonium as their sole nitrogen source (PubMed:14600241). They are unable to transport the ammonium analog methylammonium, and thus probably also ammonium (PubMed:14600241). In the absence of nitrogen source, cells lacking this gene do not show degradation of TnrA, which is entirely soluble (PubMed:17001076, PubMed:21435182).</text>
</comment>
<comment type="similarity">
    <text evidence="9">Belongs to the ammonia transporter channel (TC 1.A.11.2) family.</text>
</comment>
<dbReference type="EMBL" id="L03216">
    <property type="protein sequence ID" value="AAA17399.1"/>
    <property type="molecule type" value="Unassigned_DNA"/>
</dbReference>
<dbReference type="EMBL" id="Z82987">
    <property type="protein sequence ID" value="CAB05374.1"/>
    <property type="molecule type" value="Genomic_DNA"/>
</dbReference>
<dbReference type="EMBL" id="AL009126">
    <property type="protein sequence ID" value="CAB15668.1"/>
    <property type="molecule type" value="Genomic_DNA"/>
</dbReference>
<dbReference type="PIR" id="A36865">
    <property type="entry name" value="A36865"/>
</dbReference>
<dbReference type="RefSeq" id="NP_391532.1">
    <property type="nucleotide sequence ID" value="NC_000964.3"/>
</dbReference>
<dbReference type="RefSeq" id="WP_003227757.1">
    <property type="nucleotide sequence ID" value="NZ_OZ025638.1"/>
</dbReference>
<dbReference type="SMR" id="Q07429"/>
<dbReference type="FunCoup" id="Q07429">
    <property type="interactions" value="714"/>
</dbReference>
<dbReference type="STRING" id="224308.BSU36510"/>
<dbReference type="PaxDb" id="224308-BSU36510"/>
<dbReference type="EnsemblBacteria" id="CAB15668">
    <property type="protein sequence ID" value="CAB15668"/>
    <property type="gene ID" value="BSU_36510"/>
</dbReference>
<dbReference type="GeneID" id="936933"/>
<dbReference type="KEGG" id="bsu:BSU36510"/>
<dbReference type="PATRIC" id="fig|224308.179.peg.3951"/>
<dbReference type="eggNOG" id="COG0004">
    <property type="taxonomic scope" value="Bacteria"/>
</dbReference>
<dbReference type="InParanoid" id="Q07429"/>
<dbReference type="OrthoDB" id="9814202at2"/>
<dbReference type="PhylomeDB" id="Q07429"/>
<dbReference type="BioCyc" id="BSUB:BSU36510-MONOMER"/>
<dbReference type="Proteomes" id="UP000001570">
    <property type="component" value="Chromosome"/>
</dbReference>
<dbReference type="GO" id="GO:0005886">
    <property type="term" value="C:plasma membrane"/>
    <property type="evidence" value="ECO:0000318"/>
    <property type="project" value="GO_Central"/>
</dbReference>
<dbReference type="GO" id="GO:0008519">
    <property type="term" value="F:ammonium channel activity"/>
    <property type="evidence" value="ECO:0000318"/>
    <property type="project" value="GO_Central"/>
</dbReference>
<dbReference type="GO" id="GO:0072488">
    <property type="term" value="P:ammonium transmembrane transport"/>
    <property type="evidence" value="ECO:0000318"/>
    <property type="project" value="GO_Central"/>
</dbReference>
<dbReference type="FunFam" id="1.10.3430.10:FF:000007">
    <property type="entry name" value="Ammonium transporter"/>
    <property type="match status" value="1"/>
</dbReference>
<dbReference type="Gene3D" id="1.10.3430.10">
    <property type="entry name" value="Ammonium transporter AmtB like domains"/>
    <property type="match status" value="1"/>
</dbReference>
<dbReference type="InterPro" id="IPR029020">
    <property type="entry name" value="Ammonium/urea_transptr"/>
</dbReference>
<dbReference type="InterPro" id="IPR001905">
    <property type="entry name" value="Ammonium_transpt"/>
</dbReference>
<dbReference type="InterPro" id="IPR018047">
    <property type="entry name" value="Ammonium_transpt_CS"/>
</dbReference>
<dbReference type="InterPro" id="IPR024041">
    <property type="entry name" value="NH4_transpt_AmtB-like_dom"/>
</dbReference>
<dbReference type="NCBIfam" id="TIGR00836">
    <property type="entry name" value="amt"/>
    <property type="match status" value="1"/>
</dbReference>
<dbReference type="PANTHER" id="PTHR43029">
    <property type="entry name" value="AMMONIUM TRANSPORTER MEP2"/>
    <property type="match status" value="1"/>
</dbReference>
<dbReference type="PANTHER" id="PTHR43029:SF10">
    <property type="entry name" value="AMMONIUM TRANSPORTER MEP2"/>
    <property type="match status" value="1"/>
</dbReference>
<dbReference type="Pfam" id="PF00909">
    <property type="entry name" value="Ammonium_transp"/>
    <property type="match status" value="1"/>
</dbReference>
<dbReference type="SUPFAM" id="SSF111352">
    <property type="entry name" value="Ammonium transporter"/>
    <property type="match status" value="1"/>
</dbReference>
<dbReference type="PROSITE" id="PS01219">
    <property type="entry name" value="AMMONIUM_TRANSP"/>
    <property type="match status" value="1"/>
</dbReference>
<organism>
    <name type="scientific">Bacillus subtilis (strain 168)</name>
    <dbReference type="NCBI Taxonomy" id="224308"/>
    <lineage>
        <taxon>Bacteria</taxon>
        <taxon>Bacillati</taxon>
        <taxon>Bacillota</taxon>
        <taxon>Bacilli</taxon>
        <taxon>Bacillales</taxon>
        <taxon>Bacillaceae</taxon>
        <taxon>Bacillus</taxon>
    </lineage>
</organism>
<keyword id="KW-0924">Ammonia transport</keyword>
<keyword id="KW-1003">Cell membrane</keyword>
<keyword id="KW-0472">Membrane</keyword>
<keyword id="KW-1185">Reference proteome</keyword>
<keyword id="KW-0812">Transmembrane</keyword>
<keyword id="KW-1133">Transmembrane helix</keyword>
<keyword id="KW-0813">Transport</keyword>
<sequence length="404" mass="42733">MQMGDTVFMFFCALLVWLMTPGLALFYGGMVKSKNVLSTAMHSFSSIAIVSIVWVLFGYTLAFAPGNSIIGGLEWAGLKGVGFDPGDYSDTIPHSLFMMFQMTFAVLTTAIISGAFAERMRFGAFLLFSVLWASLVYTPVAHWVWGGGWIGQLGALDFAGGNVVHISSGVAGLVLAIVLGKRKDGTASSPHNLIYTFLGGALIWFGWFGFNVGSALTLDGVAMYAFINTNTAAAAGIAGWILVEWIINKKPTMLGAVSGAIAGLVAITPAAGFVTPFASIIIGIIGGAVCFWGVFSLKKKFGYDDALDAFGLHGIGGTWGGIATGLFATTSVNSAGADGLFYGDASLIWKQIVAIAATYVFVFIVTFVIIKIVSLFLPLRATEEEESLGLDLTMHGEKAYQDSM</sequence>
<feature type="chain" id="PRO_0000139760" description="Ammonium transporter">
    <location>
        <begin position="1"/>
        <end position="404"/>
    </location>
</feature>
<feature type="transmembrane region" description="Helical" evidence="1">
    <location>
        <begin position="7"/>
        <end position="27"/>
    </location>
</feature>
<feature type="transmembrane region" description="Helical" evidence="1">
    <location>
        <begin position="44"/>
        <end position="64"/>
    </location>
</feature>
<feature type="transmembrane region" description="Helical" evidence="1">
    <location>
        <begin position="96"/>
        <end position="116"/>
    </location>
</feature>
<feature type="transmembrane region" description="Helical" evidence="1">
    <location>
        <begin position="125"/>
        <end position="145"/>
    </location>
</feature>
<feature type="transmembrane region" description="Helical" evidence="1">
    <location>
        <begin position="158"/>
        <end position="178"/>
    </location>
</feature>
<feature type="transmembrane region" description="Helical" evidence="1">
    <location>
        <begin position="227"/>
        <end position="247"/>
    </location>
</feature>
<feature type="transmembrane region" description="Helical" evidence="1">
    <location>
        <begin position="254"/>
        <end position="274"/>
    </location>
</feature>
<feature type="transmembrane region" description="Helical" evidence="1">
    <location>
        <begin position="277"/>
        <end position="297"/>
    </location>
</feature>
<feature type="transmembrane region" description="Helical" evidence="1">
    <location>
        <begin position="352"/>
        <end position="372"/>
    </location>
</feature>
<evidence type="ECO:0000255" key="1"/>
<evidence type="ECO:0000269" key="2">
    <source>
    </source>
</evidence>
<evidence type="ECO:0000269" key="3">
    <source>
    </source>
</evidence>
<evidence type="ECO:0000269" key="4">
    <source>
    </source>
</evidence>
<evidence type="ECO:0000269" key="5">
    <source>
    </source>
</evidence>
<evidence type="ECO:0000269" key="6">
    <source>
    </source>
</evidence>
<evidence type="ECO:0000303" key="7">
    <source>
    </source>
</evidence>
<evidence type="ECO:0000303" key="8">
    <source>
    </source>
</evidence>
<evidence type="ECO:0000305" key="9"/>
<evidence type="ECO:0000305" key="10">
    <source>
    </source>
</evidence>
<evidence type="ECO:0000305" key="11">
    <source>
    </source>
</evidence>
<proteinExistence type="evidence at protein level"/>
<gene>
    <name evidence="8" type="primary">nrgA</name>
    <name evidence="7" type="synonym">amtB</name>
    <name type="ordered locus">BSU36510</name>
</gene>
<protein>
    <recommendedName>
        <fullName evidence="7">Ammonium transporter</fullName>
    </recommendedName>
    <alternativeName>
        <fullName evidence="8">Membrane protein NrgA</fullName>
    </alternativeName>
    <alternativeName>
        <fullName evidence="7">Protein AmtB</fullName>
    </alternativeName>
</protein>